<name>RISB_PARD8</name>
<sequence length="160" mass="17487">MATAYQNLSEYDFNSVPDASEMNIGIVVAEWNKNITEKLLEGACNTLEKHGVKPENIVVKRVPGSFELTFGAKRLAETKELDAVIVLGCVVRGDTPHFDYVCSGVTQGITELNLMYDIPFIFGLLTTDTMQQSEDRAGGRYGNKGDEAAVTAIKMVNFSA</sequence>
<proteinExistence type="inferred from homology"/>
<reference key="1">
    <citation type="journal article" date="2007" name="PLoS Biol.">
        <title>Evolution of symbiotic bacteria in the distal human intestine.</title>
        <authorList>
            <person name="Xu J."/>
            <person name="Mahowald M.A."/>
            <person name="Ley R.E."/>
            <person name="Lozupone C.A."/>
            <person name="Hamady M."/>
            <person name="Martens E.C."/>
            <person name="Henrissat B."/>
            <person name="Coutinho P.M."/>
            <person name="Minx P."/>
            <person name="Latreille P."/>
            <person name="Cordum H."/>
            <person name="Van Brunt A."/>
            <person name="Kim K."/>
            <person name="Fulton R.S."/>
            <person name="Fulton L.A."/>
            <person name="Clifton S.W."/>
            <person name="Wilson R.K."/>
            <person name="Knight R.D."/>
            <person name="Gordon J.I."/>
        </authorList>
    </citation>
    <scope>NUCLEOTIDE SEQUENCE [LARGE SCALE GENOMIC DNA]</scope>
    <source>
        <strain>ATCC 8503 / DSM 20701 / CIP 104284 / JCM 5825 / NCTC 11152</strain>
    </source>
</reference>
<feature type="chain" id="PRO_1000040469" description="6,7-dimethyl-8-ribityllumazine synthase">
    <location>
        <begin position="1"/>
        <end position="160"/>
    </location>
</feature>
<feature type="active site" description="Proton donor" evidence="1">
    <location>
        <position position="97"/>
    </location>
</feature>
<feature type="binding site" evidence="1">
    <location>
        <position position="31"/>
    </location>
    <ligand>
        <name>5-amino-6-(D-ribitylamino)uracil</name>
        <dbReference type="ChEBI" id="CHEBI:15934"/>
    </ligand>
</feature>
<feature type="binding site" evidence="1">
    <location>
        <begin position="65"/>
        <end position="67"/>
    </location>
    <ligand>
        <name>5-amino-6-(D-ribitylamino)uracil</name>
        <dbReference type="ChEBI" id="CHEBI:15934"/>
    </ligand>
</feature>
<feature type="binding site" evidence="1">
    <location>
        <begin position="89"/>
        <end position="91"/>
    </location>
    <ligand>
        <name>5-amino-6-(D-ribitylamino)uracil</name>
        <dbReference type="ChEBI" id="CHEBI:15934"/>
    </ligand>
</feature>
<feature type="binding site" evidence="1">
    <location>
        <begin position="94"/>
        <end position="95"/>
    </location>
    <ligand>
        <name>(2S)-2-hydroxy-3-oxobutyl phosphate</name>
        <dbReference type="ChEBI" id="CHEBI:58830"/>
    </ligand>
</feature>
<feature type="binding site" evidence="1">
    <location>
        <position position="122"/>
    </location>
    <ligand>
        <name>5-amino-6-(D-ribitylamino)uracil</name>
        <dbReference type="ChEBI" id="CHEBI:15934"/>
    </ligand>
</feature>
<feature type="binding site" evidence="1">
    <location>
        <position position="136"/>
    </location>
    <ligand>
        <name>(2S)-2-hydroxy-3-oxobutyl phosphate</name>
        <dbReference type="ChEBI" id="CHEBI:58830"/>
    </ligand>
</feature>
<organism>
    <name type="scientific">Parabacteroides distasonis (strain ATCC 8503 / DSM 20701 / CIP 104284 / JCM 5825 / NCTC 11152)</name>
    <dbReference type="NCBI Taxonomy" id="435591"/>
    <lineage>
        <taxon>Bacteria</taxon>
        <taxon>Pseudomonadati</taxon>
        <taxon>Bacteroidota</taxon>
        <taxon>Bacteroidia</taxon>
        <taxon>Bacteroidales</taxon>
        <taxon>Tannerellaceae</taxon>
        <taxon>Parabacteroides</taxon>
    </lineage>
</organism>
<gene>
    <name evidence="1" type="primary">ribH</name>
    <name type="ordered locus">BDI_0200</name>
</gene>
<comment type="function">
    <text evidence="1">Catalyzes the formation of 6,7-dimethyl-8-ribityllumazine by condensation of 5-amino-6-(D-ribitylamino)uracil with 3,4-dihydroxy-2-butanone 4-phosphate. This is the penultimate step in the biosynthesis of riboflavin.</text>
</comment>
<comment type="catalytic activity">
    <reaction evidence="1">
        <text>(2S)-2-hydroxy-3-oxobutyl phosphate + 5-amino-6-(D-ribitylamino)uracil = 6,7-dimethyl-8-(1-D-ribityl)lumazine + phosphate + 2 H2O + H(+)</text>
        <dbReference type="Rhea" id="RHEA:26152"/>
        <dbReference type="ChEBI" id="CHEBI:15377"/>
        <dbReference type="ChEBI" id="CHEBI:15378"/>
        <dbReference type="ChEBI" id="CHEBI:15934"/>
        <dbReference type="ChEBI" id="CHEBI:43474"/>
        <dbReference type="ChEBI" id="CHEBI:58201"/>
        <dbReference type="ChEBI" id="CHEBI:58830"/>
        <dbReference type="EC" id="2.5.1.78"/>
    </reaction>
</comment>
<comment type="pathway">
    <text evidence="1">Cofactor biosynthesis; riboflavin biosynthesis; riboflavin from 2-hydroxy-3-oxobutyl phosphate and 5-amino-6-(D-ribitylamino)uracil: step 1/2.</text>
</comment>
<comment type="similarity">
    <text evidence="1">Belongs to the DMRL synthase family.</text>
</comment>
<protein>
    <recommendedName>
        <fullName evidence="1">6,7-dimethyl-8-ribityllumazine synthase</fullName>
        <shortName evidence="1">DMRL synthase</shortName>
        <shortName evidence="1">LS</shortName>
        <shortName evidence="1">Lumazine synthase</shortName>
        <ecNumber evidence="1">2.5.1.78</ecNumber>
    </recommendedName>
</protein>
<evidence type="ECO:0000255" key="1">
    <source>
        <dbReference type="HAMAP-Rule" id="MF_00178"/>
    </source>
</evidence>
<dbReference type="EC" id="2.5.1.78" evidence="1"/>
<dbReference type="EMBL" id="CP000140">
    <property type="protein sequence ID" value="ABR41987.1"/>
    <property type="molecule type" value="Genomic_DNA"/>
</dbReference>
<dbReference type="RefSeq" id="WP_008774114.1">
    <property type="nucleotide sequence ID" value="NZ_LR215978.1"/>
</dbReference>
<dbReference type="SMR" id="A6L8H3"/>
<dbReference type="STRING" id="435591.BDI_0200"/>
<dbReference type="PaxDb" id="435591-BDI_0200"/>
<dbReference type="GeneID" id="93524368"/>
<dbReference type="KEGG" id="pdi:BDI_0200"/>
<dbReference type="eggNOG" id="COG0054">
    <property type="taxonomic scope" value="Bacteria"/>
</dbReference>
<dbReference type="HOGENOM" id="CLU_089358_1_2_10"/>
<dbReference type="BioCyc" id="PDIS435591:G1G5A-205-MONOMER"/>
<dbReference type="UniPathway" id="UPA00275">
    <property type="reaction ID" value="UER00404"/>
</dbReference>
<dbReference type="Proteomes" id="UP000000566">
    <property type="component" value="Chromosome"/>
</dbReference>
<dbReference type="GO" id="GO:0005829">
    <property type="term" value="C:cytosol"/>
    <property type="evidence" value="ECO:0007669"/>
    <property type="project" value="TreeGrafter"/>
</dbReference>
<dbReference type="GO" id="GO:0009349">
    <property type="term" value="C:riboflavin synthase complex"/>
    <property type="evidence" value="ECO:0007669"/>
    <property type="project" value="InterPro"/>
</dbReference>
<dbReference type="GO" id="GO:0000906">
    <property type="term" value="F:6,7-dimethyl-8-ribityllumazine synthase activity"/>
    <property type="evidence" value="ECO:0007669"/>
    <property type="project" value="UniProtKB-UniRule"/>
</dbReference>
<dbReference type="GO" id="GO:0009231">
    <property type="term" value="P:riboflavin biosynthetic process"/>
    <property type="evidence" value="ECO:0007669"/>
    <property type="project" value="UniProtKB-UniRule"/>
</dbReference>
<dbReference type="CDD" id="cd09209">
    <property type="entry name" value="Lumazine_synthase-I"/>
    <property type="match status" value="1"/>
</dbReference>
<dbReference type="Gene3D" id="3.40.50.960">
    <property type="entry name" value="Lumazine/riboflavin synthase"/>
    <property type="match status" value="1"/>
</dbReference>
<dbReference type="HAMAP" id="MF_00178">
    <property type="entry name" value="Lumazine_synth"/>
    <property type="match status" value="1"/>
</dbReference>
<dbReference type="InterPro" id="IPR034964">
    <property type="entry name" value="LS"/>
</dbReference>
<dbReference type="InterPro" id="IPR002180">
    <property type="entry name" value="LS/RS"/>
</dbReference>
<dbReference type="InterPro" id="IPR036467">
    <property type="entry name" value="LS/RS_sf"/>
</dbReference>
<dbReference type="NCBIfam" id="TIGR00114">
    <property type="entry name" value="lumazine-synth"/>
    <property type="match status" value="1"/>
</dbReference>
<dbReference type="PANTHER" id="PTHR21058:SF0">
    <property type="entry name" value="6,7-DIMETHYL-8-RIBITYLLUMAZINE SYNTHASE"/>
    <property type="match status" value="1"/>
</dbReference>
<dbReference type="PANTHER" id="PTHR21058">
    <property type="entry name" value="6,7-DIMETHYL-8-RIBITYLLUMAZINE SYNTHASE DMRL SYNTHASE LUMAZINE SYNTHASE"/>
    <property type="match status" value="1"/>
</dbReference>
<dbReference type="Pfam" id="PF00885">
    <property type="entry name" value="DMRL_synthase"/>
    <property type="match status" value="1"/>
</dbReference>
<dbReference type="SUPFAM" id="SSF52121">
    <property type="entry name" value="Lumazine synthase"/>
    <property type="match status" value="1"/>
</dbReference>
<keyword id="KW-1185">Reference proteome</keyword>
<keyword id="KW-0686">Riboflavin biosynthesis</keyword>
<keyword id="KW-0808">Transferase</keyword>
<accession>A6L8H3</accession>